<organism>
    <name type="scientific">Arabidopsis thaliana</name>
    <name type="common">Mouse-ear cress</name>
    <dbReference type="NCBI Taxonomy" id="3702"/>
    <lineage>
        <taxon>Eukaryota</taxon>
        <taxon>Viridiplantae</taxon>
        <taxon>Streptophyta</taxon>
        <taxon>Embryophyta</taxon>
        <taxon>Tracheophyta</taxon>
        <taxon>Spermatophyta</taxon>
        <taxon>Magnoliopsida</taxon>
        <taxon>eudicotyledons</taxon>
        <taxon>Gunneridae</taxon>
        <taxon>Pentapetalae</taxon>
        <taxon>rosids</taxon>
        <taxon>malvids</taxon>
        <taxon>Brassicales</taxon>
        <taxon>Brassicaceae</taxon>
        <taxon>Camelineae</taxon>
        <taxon>Arabidopsis</taxon>
    </lineage>
</organism>
<proteinExistence type="inferred from homology"/>
<evidence type="ECO:0000250" key="1"/>
<evidence type="ECO:0000255" key="2"/>
<evidence type="ECO:0000305" key="3"/>
<reference key="1">
    <citation type="journal article" date="1999" name="Nature">
        <title>Sequence and analysis of chromosome 2 of the plant Arabidopsis thaliana.</title>
        <authorList>
            <person name="Lin X."/>
            <person name="Kaul S."/>
            <person name="Rounsley S.D."/>
            <person name="Shea T.P."/>
            <person name="Benito M.-I."/>
            <person name="Town C.D."/>
            <person name="Fujii C.Y."/>
            <person name="Mason T.M."/>
            <person name="Bowman C.L."/>
            <person name="Barnstead M.E."/>
            <person name="Feldblyum T.V."/>
            <person name="Buell C.R."/>
            <person name="Ketchum K.A."/>
            <person name="Lee J.J."/>
            <person name="Ronning C.M."/>
            <person name="Koo H.L."/>
            <person name="Moffat K.S."/>
            <person name="Cronin L.A."/>
            <person name="Shen M."/>
            <person name="Pai G."/>
            <person name="Van Aken S."/>
            <person name="Umayam L."/>
            <person name="Tallon L.J."/>
            <person name="Gill J.E."/>
            <person name="Adams M.D."/>
            <person name="Carrera A.J."/>
            <person name="Creasy T.H."/>
            <person name="Goodman H.M."/>
            <person name="Somerville C.R."/>
            <person name="Copenhaver G.P."/>
            <person name="Preuss D."/>
            <person name="Nierman W.C."/>
            <person name="White O."/>
            <person name="Eisen J.A."/>
            <person name="Salzberg S.L."/>
            <person name="Fraser C.M."/>
            <person name="Venter J.C."/>
        </authorList>
    </citation>
    <scope>NUCLEOTIDE SEQUENCE [LARGE SCALE GENOMIC DNA]</scope>
    <source>
        <strain>cv. Columbia</strain>
    </source>
</reference>
<reference key="2">
    <citation type="journal article" date="2017" name="Plant J.">
        <title>Araport11: a complete reannotation of the Arabidopsis thaliana reference genome.</title>
        <authorList>
            <person name="Cheng C.Y."/>
            <person name="Krishnakumar V."/>
            <person name="Chan A.P."/>
            <person name="Thibaud-Nissen F."/>
            <person name="Schobel S."/>
            <person name="Town C.D."/>
        </authorList>
    </citation>
    <scope>GENOME REANNOTATION</scope>
    <source>
        <strain>cv. Columbia</strain>
    </source>
</reference>
<reference key="3">
    <citation type="journal article" date="2008" name="Funct. Integr. Genomics">
        <title>Serpins in plants and green algae.</title>
        <authorList>
            <person name="Roberts T.H."/>
            <person name="Hejgaard J."/>
        </authorList>
    </citation>
    <scope>GENE FAMILY</scope>
    <scope>NOMENCLATURE</scope>
</reference>
<name>SPZ3_ARATH</name>
<comment type="function">
    <text evidence="1">Probable serine protease inhibitor.</text>
</comment>
<comment type="domain">
    <text evidence="1">The reactive center loop (RCL) extends out from the body of the protein and directs binding to the target protease. The protease cleaves the serpin at the reactive site within the RCL, establishing a covalent linkage between the carboxyl group of the serpin reactive site and the serine hydroxyl of the protease. The resulting inactive serpin-protease complex is highly stable (By similarity).</text>
</comment>
<comment type="similarity">
    <text evidence="3">Belongs to the serpin family.</text>
</comment>
<gene>
    <name type="ordered locus">At2g26390</name>
    <name type="ORF">T9J22.6</name>
</gene>
<accession>O48706</accession>
<dbReference type="EMBL" id="AC002505">
    <property type="protein sequence ID" value="AAC14489.1"/>
    <property type="molecule type" value="Genomic_DNA"/>
</dbReference>
<dbReference type="EMBL" id="CP002685">
    <property type="protein sequence ID" value="AEC07832.1"/>
    <property type="molecule type" value="Genomic_DNA"/>
</dbReference>
<dbReference type="PIR" id="T00972">
    <property type="entry name" value="T00972"/>
</dbReference>
<dbReference type="RefSeq" id="NP_180207.1">
    <property type="nucleotide sequence ID" value="NM_128196.2"/>
</dbReference>
<dbReference type="SMR" id="O48706"/>
<dbReference type="FunCoup" id="O48706">
    <property type="interactions" value="54"/>
</dbReference>
<dbReference type="STRING" id="3702.O48706"/>
<dbReference type="PaxDb" id="3702-AT2G26390.1"/>
<dbReference type="ProteomicsDB" id="226707"/>
<dbReference type="EnsemblPlants" id="AT2G26390.1">
    <property type="protein sequence ID" value="AT2G26390.1"/>
    <property type="gene ID" value="AT2G26390"/>
</dbReference>
<dbReference type="GeneID" id="817179"/>
<dbReference type="Gramene" id="AT2G26390.1">
    <property type="protein sequence ID" value="AT2G26390.1"/>
    <property type="gene ID" value="AT2G26390"/>
</dbReference>
<dbReference type="KEGG" id="ath:AT2G26390"/>
<dbReference type="Araport" id="AT2G26390"/>
<dbReference type="TAIR" id="AT2G26390">
    <property type="gene designation" value="SERP4"/>
</dbReference>
<dbReference type="eggNOG" id="KOG2392">
    <property type="taxonomic scope" value="Eukaryota"/>
</dbReference>
<dbReference type="HOGENOM" id="CLU_023330_4_0_1"/>
<dbReference type="InParanoid" id="O48706"/>
<dbReference type="OMA" id="MTKGHIR"/>
<dbReference type="PhylomeDB" id="O48706"/>
<dbReference type="PRO" id="PR:O48706"/>
<dbReference type="Proteomes" id="UP000006548">
    <property type="component" value="Chromosome 2"/>
</dbReference>
<dbReference type="ExpressionAtlas" id="O48706">
    <property type="expression patterns" value="baseline and differential"/>
</dbReference>
<dbReference type="GO" id="GO:0005615">
    <property type="term" value="C:extracellular space"/>
    <property type="evidence" value="ECO:0007669"/>
    <property type="project" value="InterPro"/>
</dbReference>
<dbReference type="GO" id="GO:0004867">
    <property type="term" value="F:serine-type endopeptidase inhibitor activity"/>
    <property type="evidence" value="ECO:0007669"/>
    <property type="project" value="UniProtKB-KW"/>
</dbReference>
<dbReference type="CDD" id="cd02043">
    <property type="entry name" value="serpinP_plants"/>
    <property type="match status" value="1"/>
</dbReference>
<dbReference type="Gene3D" id="2.30.39.10">
    <property type="entry name" value="Alpha-1-antitrypsin, domain 1"/>
    <property type="match status" value="1"/>
</dbReference>
<dbReference type="Gene3D" id="3.30.497.10">
    <property type="entry name" value="Antithrombin, subunit I, domain 2"/>
    <property type="match status" value="1"/>
</dbReference>
<dbReference type="InterPro" id="IPR023795">
    <property type="entry name" value="Serpin_CS"/>
</dbReference>
<dbReference type="InterPro" id="IPR023796">
    <property type="entry name" value="Serpin_dom"/>
</dbReference>
<dbReference type="InterPro" id="IPR000215">
    <property type="entry name" value="Serpin_fam"/>
</dbReference>
<dbReference type="InterPro" id="IPR036186">
    <property type="entry name" value="Serpin_sf"/>
</dbReference>
<dbReference type="InterPro" id="IPR042178">
    <property type="entry name" value="Serpin_sf_1"/>
</dbReference>
<dbReference type="InterPro" id="IPR042185">
    <property type="entry name" value="Serpin_sf_2"/>
</dbReference>
<dbReference type="PANTHER" id="PTHR11461">
    <property type="entry name" value="SERINE PROTEASE INHIBITOR, SERPIN"/>
    <property type="match status" value="1"/>
</dbReference>
<dbReference type="PANTHER" id="PTHR11461:SF304">
    <property type="entry name" value="SERPIN-Z10-RELATED"/>
    <property type="match status" value="1"/>
</dbReference>
<dbReference type="Pfam" id="PF00079">
    <property type="entry name" value="Serpin"/>
    <property type="match status" value="1"/>
</dbReference>
<dbReference type="SMART" id="SM00093">
    <property type="entry name" value="SERPIN"/>
    <property type="match status" value="1"/>
</dbReference>
<dbReference type="SUPFAM" id="SSF56574">
    <property type="entry name" value="Serpins"/>
    <property type="match status" value="1"/>
</dbReference>
<dbReference type="PROSITE" id="PS00284">
    <property type="entry name" value="SERPIN"/>
    <property type="match status" value="1"/>
</dbReference>
<keyword id="KW-0646">Protease inhibitor</keyword>
<keyword id="KW-1185">Reference proteome</keyword>
<keyword id="KW-0722">Serine protease inhibitor</keyword>
<protein>
    <recommendedName>
        <fullName>Serpin-Z3</fullName>
    </recommendedName>
    <alternativeName>
        <fullName>ArathZ3</fullName>
    </alternativeName>
</protein>
<feature type="chain" id="PRO_0000334548" description="Serpin-Z3">
    <location>
        <begin position="1"/>
        <end position="389"/>
    </location>
</feature>
<feature type="region of interest" description="RCL">
    <location>
        <begin position="337"/>
        <end position="361"/>
    </location>
</feature>
<feature type="site" description="Reactive bond" evidence="2">
    <location>
        <begin position="351"/>
        <end position="352"/>
    </location>
</feature>
<sequence length="389" mass="43221">MELGKSIENQNNVVARLAKKVIETDVANGSNVVFSPMSINVLLSLIAAGSNPVTKEEILSFLMSPSTDHLNAVLAKIADGGTERSDLCLSTAHGVWIDKSSYLKPSFKELLENSYKASCSQVDFATKPVEVIDEVNIWADVHTNGLIKQILSRDCTDTIKEIRNSTLILANAVYFKAAWSRKFDAKLTKDNDFHLLDGNTVKVPFMMSYKDQYLRGYDGFQVLRLPYVEDKRHFSMYIYLPNDKDGLAALLEKISTEPGFLDSHIPLHRTPVDALRIPKLNFSFEFKASEVLKDMGLTSPFTSKGNLTEMVDSPSNGDKLHVSSIIHKACIEVDEEGTEAAAVSVAIMMPQCLMRNPDFVADHPFLFTVREDNSGVILFIGQVLDPSKH</sequence>